<proteinExistence type="inferred from homology"/>
<sequence>MAKIGRALISVSEKTGVVEFSRALAGYGVEILSTGGTAKLLREAGIAVKDVSEFTGFPEMLDGRVKTLHPKVHGGILGMRENPAHVAKMQEHGIEPIDMVVVNLYPFEATVAKEDCTMEDAIENIDIGGPTMLRSAAKNNRDVTVVVDHADYAVVLDEMKNSGGSVSCETNFRLAVKVYQHTAAYDGAISNWLGARTGDGVAAFPDTLTLQYKLAQGMRYGENPHQSGAFYVEKGSKEASISTARQIQGKELSYNNIGDTDAALECVKQFTEPACVIVKHANPCGVALGANIMEAYDKAYKTDPESSFGGIIAFNRELDESTARAIVERQFVEVIIAPKVTEAASEVVAAKKNVRLMECGFWPENPAPRFDYKRVNGGMLVQDADLELFTELKVVTKRAPTDKEMEDLLFTWRVAKFVKSNAIVYGRDNSTVGVGAGQMSRVNSARIAAIKAEHAGIPVQGAVMASDAFFPFRDGLDNAAAVGVTAVIQPGGSMRDAEVIAAADEHGIAMVFTAMRHFRH</sequence>
<protein>
    <recommendedName>
        <fullName evidence="1">Bifunctional purine biosynthesis protein PurH</fullName>
    </recommendedName>
    <domain>
        <recommendedName>
            <fullName evidence="1">Phosphoribosylaminoimidazolecarboxamide formyltransferase</fullName>
            <ecNumber evidence="1">2.1.2.3</ecNumber>
        </recommendedName>
        <alternativeName>
            <fullName evidence="1">AICAR transformylase</fullName>
        </alternativeName>
    </domain>
    <domain>
        <recommendedName>
            <fullName evidence="1">IMP cyclohydrolase</fullName>
            <ecNumber evidence="1">3.5.4.10</ecNumber>
        </recommendedName>
        <alternativeName>
            <fullName evidence="1">ATIC</fullName>
        </alternativeName>
        <alternativeName>
            <fullName evidence="1">IMP synthase</fullName>
        </alternativeName>
        <alternativeName>
            <fullName evidence="1">Inosinicase</fullName>
        </alternativeName>
    </domain>
</protein>
<gene>
    <name evidence="1" type="primary">purH</name>
    <name type="ordered locus">GM21_3524</name>
</gene>
<accession>C6E5Z3</accession>
<keyword id="KW-0378">Hydrolase</keyword>
<keyword id="KW-0511">Multifunctional enzyme</keyword>
<keyword id="KW-0658">Purine biosynthesis</keyword>
<keyword id="KW-0808">Transferase</keyword>
<reference key="1">
    <citation type="submission" date="2009-07" db="EMBL/GenBank/DDBJ databases">
        <title>Complete sequence of Geobacter sp. M21.</title>
        <authorList>
            <consortium name="US DOE Joint Genome Institute"/>
            <person name="Lucas S."/>
            <person name="Copeland A."/>
            <person name="Lapidus A."/>
            <person name="Glavina del Rio T."/>
            <person name="Dalin E."/>
            <person name="Tice H."/>
            <person name="Bruce D."/>
            <person name="Goodwin L."/>
            <person name="Pitluck S."/>
            <person name="Saunders E."/>
            <person name="Brettin T."/>
            <person name="Detter J.C."/>
            <person name="Han C."/>
            <person name="Larimer F."/>
            <person name="Land M."/>
            <person name="Hauser L."/>
            <person name="Kyrpides N."/>
            <person name="Ovchinnikova G."/>
            <person name="Lovley D."/>
        </authorList>
    </citation>
    <scope>NUCLEOTIDE SEQUENCE [LARGE SCALE GENOMIC DNA]</scope>
    <source>
        <strain>M21</strain>
    </source>
</reference>
<name>PUR9_GEOSM</name>
<evidence type="ECO:0000255" key="1">
    <source>
        <dbReference type="HAMAP-Rule" id="MF_00139"/>
    </source>
</evidence>
<evidence type="ECO:0000255" key="2">
    <source>
        <dbReference type="PROSITE-ProRule" id="PRU01202"/>
    </source>
</evidence>
<dbReference type="EC" id="2.1.2.3" evidence="1"/>
<dbReference type="EC" id="3.5.4.10" evidence="1"/>
<dbReference type="EMBL" id="CP001661">
    <property type="protein sequence ID" value="ACT19545.1"/>
    <property type="molecule type" value="Genomic_DNA"/>
</dbReference>
<dbReference type="SMR" id="C6E5Z3"/>
<dbReference type="STRING" id="443144.GM21_3524"/>
<dbReference type="KEGG" id="gem:GM21_3524"/>
<dbReference type="eggNOG" id="COG0138">
    <property type="taxonomic scope" value="Bacteria"/>
</dbReference>
<dbReference type="HOGENOM" id="CLU_016316_5_2_7"/>
<dbReference type="OrthoDB" id="9802065at2"/>
<dbReference type="UniPathway" id="UPA00074">
    <property type="reaction ID" value="UER00133"/>
</dbReference>
<dbReference type="UniPathway" id="UPA00074">
    <property type="reaction ID" value="UER00135"/>
</dbReference>
<dbReference type="GO" id="GO:0005829">
    <property type="term" value="C:cytosol"/>
    <property type="evidence" value="ECO:0007669"/>
    <property type="project" value="TreeGrafter"/>
</dbReference>
<dbReference type="GO" id="GO:0003937">
    <property type="term" value="F:IMP cyclohydrolase activity"/>
    <property type="evidence" value="ECO:0007669"/>
    <property type="project" value="UniProtKB-UniRule"/>
</dbReference>
<dbReference type="GO" id="GO:0004643">
    <property type="term" value="F:phosphoribosylaminoimidazolecarboxamide formyltransferase activity"/>
    <property type="evidence" value="ECO:0007669"/>
    <property type="project" value="UniProtKB-UniRule"/>
</dbReference>
<dbReference type="GO" id="GO:0006189">
    <property type="term" value="P:'de novo' IMP biosynthetic process"/>
    <property type="evidence" value="ECO:0007669"/>
    <property type="project" value="UniProtKB-UniRule"/>
</dbReference>
<dbReference type="CDD" id="cd01421">
    <property type="entry name" value="IMPCH"/>
    <property type="match status" value="1"/>
</dbReference>
<dbReference type="FunFam" id="3.40.140.20:FF:000001">
    <property type="entry name" value="Bifunctional purine biosynthesis protein PurH"/>
    <property type="match status" value="1"/>
</dbReference>
<dbReference type="FunFam" id="3.40.140.20:FF:000002">
    <property type="entry name" value="Bifunctional purine biosynthesis protein PurH"/>
    <property type="match status" value="1"/>
</dbReference>
<dbReference type="FunFam" id="3.40.50.1380:FF:000001">
    <property type="entry name" value="Bifunctional purine biosynthesis protein PurH"/>
    <property type="match status" value="1"/>
</dbReference>
<dbReference type="Gene3D" id="3.40.140.20">
    <property type="match status" value="2"/>
</dbReference>
<dbReference type="Gene3D" id="3.40.50.1380">
    <property type="entry name" value="Methylglyoxal synthase-like domain"/>
    <property type="match status" value="1"/>
</dbReference>
<dbReference type="HAMAP" id="MF_00139">
    <property type="entry name" value="PurH"/>
    <property type="match status" value="1"/>
</dbReference>
<dbReference type="InterPro" id="IPR024051">
    <property type="entry name" value="AICAR_Tfase_dup_dom_sf"/>
</dbReference>
<dbReference type="InterPro" id="IPR016193">
    <property type="entry name" value="Cytidine_deaminase-like"/>
</dbReference>
<dbReference type="InterPro" id="IPR011607">
    <property type="entry name" value="MGS-like_dom"/>
</dbReference>
<dbReference type="InterPro" id="IPR036914">
    <property type="entry name" value="MGS-like_dom_sf"/>
</dbReference>
<dbReference type="InterPro" id="IPR002695">
    <property type="entry name" value="PurH-like"/>
</dbReference>
<dbReference type="NCBIfam" id="NF002049">
    <property type="entry name" value="PRK00881.1"/>
    <property type="match status" value="1"/>
</dbReference>
<dbReference type="NCBIfam" id="TIGR00355">
    <property type="entry name" value="purH"/>
    <property type="match status" value="1"/>
</dbReference>
<dbReference type="PANTHER" id="PTHR11692:SF0">
    <property type="entry name" value="BIFUNCTIONAL PURINE BIOSYNTHESIS PROTEIN ATIC"/>
    <property type="match status" value="1"/>
</dbReference>
<dbReference type="PANTHER" id="PTHR11692">
    <property type="entry name" value="BIFUNCTIONAL PURINE BIOSYNTHESIS PROTEIN PURH"/>
    <property type="match status" value="1"/>
</dbReference>
<dbReference type="Pfam" id="PF01808">
    <property type="entry name" value="AICARFT_IMPCHas"/>
    <property type="match status" value="1"/>
</dbReference>
<dbReference type="Pfam" id="PF02142">
    <property type="entry name" value="MGS"/>
    <property type="match status" value="1"/>
</dbReference>
<dbReference type="PIRSF" id="PIRSF000414">
    <property type="entry name" value="AICARFT_IMPCHas"/>
    <property type="match status" value="1"/>
</dbReference>
<dbReference type="SMART" id="SM00798">
    <property type="entry name" value="AICARFT_IMPCHas"/>
    <property type="match status" value="1"/>
</dbReference>
<dbReference type="SMART" id="SM00851">
    <property type="entry name" value="MGS"/>
    <property type="match status" value="1"/>
</dbReference>
<dbReference type="SUPFAM" id="SSF53927">
    <property type="entry name" value="Cytidine deaminase-like"/>
    <property type="match status" value="1"/>
</dbReference>
<dbReference type="SUPFAM" id="SSF52335">
    <property type="entry name" value="Methylglyoxal synthase-like"/>
    <property type="match status" value="1"/>
</dbReference>
<dbReference type="PROSITE" id="PS51855">
    <property type="entry name" value="MGS"/>
    <property type="match status" value="1"/>
</dbReference>
<feature type="chain" id="PRO_1000203250" description="Bifunctional purine biosynthesis protein PurH">
    <location>
        <begin position="1"/>
        <end position="520"/>
    </location>
</feature>
<feature type="domain" description="MGS-like" evidence="2">
    <location>
        <begin position="1"/>
        <end position="147"/>
    </location>
</feature>
<comment type="catalytic activity">
    <reaction evidence="1">
        <text>(6R)-10-formyltetrahydrofolate + 5-amino-1-(5-phospho-beta-D-ribosyl)imidazole-4-carboxamide = 5-formamido-1-(5-phospho-D-ribosyl)imidazole-4-carboxamide + (6S)-5,6,7,8-tetrahydrofolate</text>
        <dbReference type="Rhea" id="RHEA:22192"/>
        <dbReference type="ChEBI" id="CHEBI:57453"/>
        <dbReference type="ChEBI" id="CHEBI:58467"/>
        <dbReference type="ChEBI" id="CHEBI:58475"/>
        <dbReference type="ChEBI" id="CHEBI:195366"/>
        <dbReference type="EC" id="2.1.2.3"/>
    </reaction>
</comment>
<comment type="catalytic activity">
    <reaction evidence="1">
        <text>IMP + H2O = 5-formamido-1-(5-phospho-D-ribosyl)imidazole-4-carboxamide</text>
        <dbReference type="Rhea" id="RHEA:18445"/>
        <dbReference type="ChEBI" id="CHEBI:15377"/>
        <dbReference type="ChEBI" id="CHEBI:58053"/>
        <dbReference type="ChEBI" id="CHEBI:58467"/>
        <dbReference type="EC" id="3.5.4.10"/>
    </reaction>
</comment>
<comment type="pathway">
    <text evidence="1">Purine metabolism; IMP biosynthesis via de novo pathway; 5-formamido-1-(5-phospho-D-ribosyl)imidazole-4-carboxamide from 5-amino-1-(5-phospho-D-ribosyl)imidazole-4-carboxamide (10-formyl THF route): step 1/1.</text>
</comment>
<comment type="pathway">
    <text evidence="1">Purine metabolism; IMP biosynthesis via de novo pathway; IMP from 5-formamido-1-(5-phospho-D-ribosyl)imidazole-4-carboxamide: step 1/1.</text>
</comment>
<comment type="domain">
    <text evidence="1">The IMP cyclohydrolase activity resides in the N-terminal region.</text>
</comment>
<comment type="similarity">
    <text evidence="1">Belongs to the PurH family.</text>
</comment>
<organism>
    <name type="scientific">Geobacter sp. (strain M21)</name>
    <dbReference type="NCBI Taxonomy" id="443144"/>
    <lineage>
        <taxon>Bacteria</taxon>
        <taxon>Pseudomonadati</taxon>
        <taxon>Thermodesulfobacteriota</taxon>
        <taxon>Desulfuromonadia</taxon>
        <taxon>Geobacterales</taxon>
        <taxon>Geobacteraceae</taxon>
        <taxon>Geobacter</taxon>
    </lineage>
</organism>